<protein>
    <recommendedName>
        <fullName evidence="3">3',5'-cyclic adenosine monophosphate phosphodiesterase CpdA</fullName>
        <shortName evidence="3">3',5'-cyclic AMP phosphodiesterase</shortName>
        <shortName evidence="3">cAMP phosphodiesterase</shortName>
        <ecNumber evidence="3 4">3.1.4.53</ecNumber>
    </recommendedName>
</protein>
<sequence length="275" mass="30938">MESLLTLPLAGEARVRILQITDTHLFAQKHEALLGVNTWESYQAVLEAIRPHQHEFDLIVATGDLAQDQSSAAYQHFAEGIASFRAPCVWLPGNHDFQPAMYSALQDAGISPAKRVFIGEQWQILLLDSQVFGVPHGELSEFQLEWLERKLADAPERHTLLLLHHHPLPAGCSWLDQHSLRNAGELDTVLAKFPHVKYLLCGHIHQELDLDWNGRRLLATPSTCVQFKPHCSNFTLDTIAPGWRTLELHADGTLTTEVHRLADTRFQPDTASEGY</sequence>
<evidence type="ECO:0000250" key="1">
    <source>
        <dbReference type="UniProtKB" id="P9WP65"/>
    </source>
</evidence>
<evidence type="ECO:0000250" key="2">
    <source>
        <dbReference type="UniProtKB" id="Q6XBH1"/>
    </source>
</evidence>
<evidence type="ECO:0000255" key="3">
    <source>
        <dbReference type="HAMAP-Rule" id="MF_00905"/>
    </source>
</evidence>
<evidence type="ECO:0000269" key="4">
    <source>
    </source>
</evidence>
<evidence type="ECO:0000303" key="5">
    <source>
    </source>
</evidence>
<evidence type="ECO:0000303" key="6">
    <source>
    </source>
</evidence>
<evidence type="ECO:0000305" key="7"/>
<evidence type="ECO:0000305" key="8">
    <source>
    </source>
</evidence>
<name>CPDA_ECOLI</name>
<comment type="function">
    <text evidence="3 4">Hydrolyzes cAMP to 5'-AMP. Plays an important regulatory role in modulating the intracellular concentration of cAMP, thereby influencing cAMP-dependent processes. Specific for cAMP.</text>
</comment>
<comment type="catalytic activity">
    <reaction evidence="3 4">
        <text>3',5'-cyclic AMP + H2O = AMP + H(+)</text>
        <dbReference type="Rhea" id="RHEA:25277"/>
        <dbReference type="ChEBI" id="CHEBI:15377"/>
        <dbReference type="ChEBI" id="CHEBI:15378"/>
        <dbReference type="ChEBI" id="CHEBI:58165"/>
        <dbReference type="ChEBI" id="CHEBI:456215"/>
        <dbReference type="EC" id="3.1.4.53"/>
    </reaction>
</comment>
<comment type="cofactor">
    <cofactor evidence="2 8">
        <name>Fe(2+)</name>
        <dbReference type="ChEBI" id="CHEBI:29033"/>
    </cofactor>
    <text evidence="2">Binds 2 Fe(2+) ions per subunit.</text>
</comment>
<comment type="biophysicochemical properties">
    <kinetics>
        <KM evidence="4">0.5 mM for cAMP</KM>
        <Vmax evidence="4">2.0 umol/min/mg enzyme</Vmax>
    </kinetics>
</comment>
<comment type="similarity">
    <text evidence="3 5">Belongs to the cyclic nucleotide phosphodiesterase class-III family.</text>
</comment>
<comment type="sequence caution" evidence="7">
    <conflict type="erroneous initiation">
        <sequence resource="EMBL-CDS" id="AAA69200"/>
    </conflict>
</comment>
<keyword id="KW-0114">cAMP</keyword>
<keyword id="KW-0903">Direct protein sequencing</keyword>
<keyword id="KW-0378">Hydrolase</keyword>
<keyword id="KW-0408">Iron</keyword>
<keyword id="KW-0479">Metal-binding</keyword>
<keyword id="KW-0547">Nucleotide-binding</keyword>
<keyword id="KW-1185">Reference proteome</keyword>
<proteinExistence type="evidence at protein level"/>
<dbReference type="EC" id="3.1.4.53" evidence="3 4"/>
<dbReference type="EMBL" id="D16557">
    <property type="protein sequence ID" value="BAA03989.1"/>
    <property type="molecule type" value="Genomic_DNA"/>
</dbReference>
<dbReference type="EMBL" id="U28377">
    <property type="protein sequence ID" value="AAA69200.1"/>
    <property type="status" value="ALT_INIT"/>
    <property type="molecule type" value="Genomic_DNA"/>
</dbReference>
<dbReference type="EMBL" id="U00096">
    <property type="protein sequence ID" value="AAC76068.1"/>
    <property type="molecule type" value="Genomic_DNA"/>
</dbReference>
<dbReference type="EMBL" id="AP009048">
    <property type="protein sequence ID" value="BAE77088.1"/>
    <property type="molecule type" value="Genomic_DNA"/>
</dbReference>
<dbReference type="PIR" id="F65090">
    <property type="entry name" value="F65090"/>
</dbReference>
<dbReference type="RefSeq" id="NP_417504.1">
    <property type="nucleotide sequence ID" value="NC_000913.3"/>
</dbReference>
<dbReference type="RefSeq" id="WP_000444747.1">
    <property type="nucleotide sequence ID" value="NZ_STEB01000001.1"/>
</dbReference>
<dbReference type="SMR" id="P0AEW4"/>
<dbReference type="BioGRID" id="4262395">
    <property type="interactions" value="17"/>
</dbReference>
<dbReference type="BioGRID" id="851832">
    <property type="interactions" value="2"/>
</dbReference>
<dbReference type="FunCoup" id="P0AEW4">
    <property type="interactions" value="104"/>
</dbReference>
<dbReference type="IntAct" id="P0AEW4">
    <property type="interactions" value="10"/>
</dbReference>
<dbReference type="STRING" id="511145.b3032"/>
<dbReference type="jPOST" id="P0AEW4"/>
<dbReference type="PaxDb" id="511145-b3032"/>
<dbReference type="EnsemblBacteria" id="AAC76068">
    <property type="protein sequence ID" value="AAC76068"/>
    <property type="gene ID" value="b3032"/>
</dbReference>
<dbReference type="GeneID" id="93778961"/>
<dbReference type="GeneID" id="947515"/>
<dbReference type="KEGG" id="ecj:JW3000"/>
<dbReference type="KEGG" id="eco:b3032"/>
<dbReference type="KEGG" id="ecoc:C3026_16560"/>
<dbReference type="PATRIC" id="fig|1411691.4.peg.3699"/>
<dbReference type="EchoBASE" id="EB2104"/>
<dbReference type="eggNOG" id="COG1409">
    <property type="taxonomic scope" value="Bacteria"/>
</dbReference>
<dbReference type="HOGENOM" id="CLU_070320_0_0_6"/>
<dbReference type="InParanoid" id="P0AEW4"/>
<dbReference type="OMA" id="CAWLDQH"/>
<dbReference type="OrthoDB" id="9784378at2"/>
<dbReference type="PhylomeDB" id="P0AEW4"/>
<dbReference type="BioCyc" id="EcoCyc:G7579-MONOMER"/>
<dbReference type="BioCyc" id="MetaCyc:G7579-MONOMER"/>
<dbReference type="BRENDA" id="3.1.4.53">
    <property type="organism ID" value="2026"/>
</dbReference>
<dbReference type="SABIO-RK" id="P0AEW4"/>
<dbReference type="PRO" id="PR:P0AEW4"/>
<dbReference type="Proteomes" id="UP000000625">
    <property type="component" value="Chromosome"/>
</dbReference>
<dbReference type="GO" id="GO:0004115">
    <property type="term" value="F:3',5'-cyclic-AMP phosphodiesterase activity"/>
    <property type="evidence" value="ECO:0000314"/>
    <property type="project" value="EcoCyc"/>
</dbReference>
<dbReference type="GO" id="GO:0008198">
    <property type="term" value="F:ferrous iron binding"/>
    <property type="evidence" value="ECO:0000314"/>
    <property type="project" value="EcoCyc"/>
</dbReference>
<dbReference type="GO" id="GO:0000166">
    <property type="term" value="F:nucleotide binding"/>
    <property type="evidence" value="ECO:0007669"/>
    <property type="project" value="UniProtKB-UniRule"/>
</dbReference>
<dbReference type="CDD" id="cd07402">
    <property type="entry name" value="MPP_GpdQ"/>
    <property type="match status" value="1"/>
</dbReference>
<dbReference type="FunFam" id="3.60.21.10:FF:000014">
    <property type="entry name" value="3',5'-cyclic adenosine monophosphate phosphodiesterase CpdA"/>
    <property type="match status" value="1"/>
</dbReference>
<dbReference type="Gene3D" id="3.60.21.10">
    <property type="match status" value="1"/>
</dbReference>
<dbReference type="HAMAP" id="MF_00905">
    <property type="entry name" value="cAMP_phosphodiest_CpdA"/>
    <property type="match status" value="1"/>
</dbReference>
<dbReference type="InterPro" id="IPR004843">
    <property type="entry name" value="Calcineurin-like_PHP_ApaH"/>
</dbReference>
<dbReference type="InterPro" id="IPR046379">
    <property type="entry name" value="cAMP_phosphodiest_CpdA"/>
</dbReference>
<dbReference type="InterPro" id="IPR050884">
    <property type="entry name" value="CNP_phosphodiesterase-III"/>
</dbReference>
<dbReference type="InterPro" id="IPR026575">
    <property type="entry name" value="GpdQ/CpdA-like"/>
</dbReference>
<dbReference type="InterPro" id="IPR029052">
    <property type="entry name" value="Metallo-depent_PP-like"/>
</dbReference>
<dbReference type="NCBIfam" id="NF008359">
    <property type="entry name" value="PRK11148.1"/>
    <property type="match status" value="1"/>
</dbReference>
<dbReference type="PANTHER" id="PTHR42988:SF2">
    <property type="entry name" value="CYCLIC NUCLEOTIDE PHOSPHODIESTERASE CBUA0032-RELATED"/>
    <property type="match status" value="1"/>
</dbReference>
<dbReference type="PANTHER" id="PTHR42988">
    <property type="entry name" value="PHOSPHOHYDROLASE"/>
    <property type="match status" value="1"/>
</dbReference>
<dbReference type="Pfam" id="PF00149">
    <property type="entry name" value="Metallophos"/>
    <property type="match status" value="1"/>
</dbReference>
<dbReference type="SUPFAM" id="SSF56300">
    <property type="entry name" value="Metallo-dependent phosphatases"/>
    <property type="match status" value="1"/>
</dbReference>
<reference key="1">
    <citation type="journal article" date="1996" name="J. Biol. Chem.">
        <title>Identification of the cpdA gene encoding cyclic 3',5'-adenosine monophosphate phosphodiesterase in Escherichia coli.</title>
        <authorList>
            <person name="Imamura R."/>
            <person name="Yamanaka K."/>
            <person name="Ogura T."/>
            <person name="Hiraga S."/>
            <person name="Fujita N."/>
            <person name="Ishihama A."/>
            <person name="Niki H."/>
        </authorList>
    </citation>
    <scope>NUCLEOTIDE SEQUENCE [GENOMIC DNA]</scope>
    <scope>PROTEIN SEQUENCE OF 1-18</scope>
    <scope>GENE NAME</scope>
    <scope>FUNCTION</scope>
    <scope>CATALYTIC ACTIVITY</scope>
    <scope>COFACTOR</scope>
    <scope>BIOPHYSICOCHEMICAL PROPERTIES</scope>
    <source>
        <strain>K12</strain>
    </source>
</reference>
<reference key="2">
    <citation type="journal article" date="1997" name="Science">
        <title>The complete genome sequence of Escherichia coli K-12.</title>
        <authorList>
            <person name="Blattner F.R."/>
            <person name="Plunkett G. III"/>
            <person name="Bloch C.A."/>
            <person name="Perna N.T."/>
            <person name="Burland V."/>
            <person name="Riley M."/>
            <person name="Collado-Vides J."/>
            <person name="Glasner J.D."/>
            <person name="Rode C.K."/>
            <person name="Mayhew G.F."/>
            <person name="Gregor J."/>
            <person name="Davis N.W."/>
            <person name="Kirkpatrick H.A."/>
            <person name="Goeden M.A."/>
            <person name="Rose D.J."/>
            <person name="Mau B."/>
            <person name="Shao Y."/>
        </authorList>
    </citation>
    <scope>NUCLEOTIDE SEQUENCE [LARGE SCALE GENOMIC DNA]</scope>
    <source>
        <strain>K12 / MG1655 / ATCC 47076</strain>
    </source>
</reference>
<reference key="3">
    <citation type="journal article" date="2006" name="Mol. Syst. Biol.">
        <title>Highly accurate genome sequences of Escherichia coli K-12 strains MG1655 and W3110.</title>
        <authorList>
            <person name="Hayashi K."/>
            <person name="Morooka N."/>
            <person name="Yamamoto Y."/>
            <person name="Fujita K."/>
            <person name="Isono K."/>
            <person name="Choi S."/>
            <person name="Ohtsubo E."/>
            <person name="Baba T."/>
            <person name="Wanner B.L."/>
            <person name="Mori H."/>
            <person name="Horiuchi T."/>
        </authorList>
    </citation>
    <scope>NUCLEOTIDE SEQUENCE [LARGE SCALE GENOMIC DNA]</scope>
    <source>
        <strain>K12 / W3110 / ATCC 27325 / DSM 5911</strain>
    </source>
</reference>
<reference key="4">
    <citation type="journal article" date="2002" name="Proteins">
        <title>3',5' Cyclic nucleotide phosphodiesterases class III: members, structure, and catalytic mechanism.</title>
        <authorList>
            <person name="Richter W."/>
        </authorList>
    </citation>
    <scope>GENE FAMILY</scope>
    <scope>NOMENCLATURE</scope>
    <scope>MODELING OF METAL-BINDING SITES</scope>
</reference>
<accession>P0AEW4</accession>
<accession>P36650</accession>
<accession>Q2M9G8</accession>
<gene>
    <name evidence="3 6" type="primary">cpdA</name>
    <name type="synonym">icc</name>
    <name type="ordered locus">b3032</name>
    <name type="ordered locus">JW3000</name>
</gene>
<organism>
    <name type="scientific">Escherichia coli (strain K12)</name>
    <dbReference type="NCBI Taxonomy" id="83333"/>
    <lineage>
        <taxon>Bacteria</taxon>
        <taxon>Pseudomonadati</taxon>
        <taxon>Pseudomonadota</taxon>
        <taxon>Gammaproteobacteria</taxon>
        <taxon>Enterobacterales</taxon>
        <taxon>Enterobacteriaceae</taxon>
        <taxon>Escherichia</taxon>
    </lineage>
</organism>
<feature type="chain" id="PRO_0000084146" description="3',5'-cyclic adenosine monophosphate phosphodiesterase CpdA">
    <location>
        <begin position="1"/>
        <end position="275"/>
    </location>
</feature>
<feature type="binding site" evidence="2">
    <location>
        <position position="22"/>
    </location>
    <ligand>
        <name>Fe cation</name>
        <dbReference type="ChEBI" id="CHEBI:24875"/>
        <label>1</label>
    </ligand>
</feature>
<feature type="binding site" evidence="1">
    <location>
        <position position="24"/>
    </location>
    <ligand>
        <name>AMP</name>
        <dbReference type="ChEBI" id="CHEBI:456215"/>
    </ligand>
</feature>
<feature type="binding site" evidence="2">
    <location>
        <position position="24"/>
    </location>
    <ligand>
        <name>Fe cation</name>
        <dbReference type="ChEBI" id="CHEBI:24875"/>
        <label>1</label>
    </ligand>
</feature>
<feature type="binding site" evidence="1">
    <location>
        <position position="64"/>
    </location>
    <ligand>
        <name>AMP</name>
        <dbReference type="ChEBI" id="CHEBI:456215"/>
    </ligand>
</feature>
<feature type="binding site" evidence="2">
    <location>
        <position position="64"/>
    </location>
    <ligand>
        <name>Fe cation</name>
        <dbReference type="ChEBI" id="CHEBI:24875"/>
        <label>1</label>
    </ligand>
</feature>
<feature type="binding site" evidence="2">
    <location>
        <position position="64"/>
    </location>
    <ligand>
        <name>Fe cation</name>
        <dbReference type="ChEBI" id="CHEBI:24875"/>
        <label>2</label>
    </ligand>
</feature>
<feature type="binding site" evidence="1">
    <location>
        <begin position="94"/>
        <end position="95"/>
    </location>
    <ligand>
        <name>AMP</name>
        <dbReference type="ChEBI" id="CHEBI:456215"/>
    </ligand>
</feature>
<feature type="binding site" evidence="2">
    <location>
        <position position="94"/>
    </location>
    <ligand>
        <name>Fe cation</name>
        <dbReference type="ChEBI" id="CHEBI:24875"/>
        <label>2</label>
    </ligand>
</feature>
<feature type="binding site" evidence="2">
    <location>
        <position position="164"/>
    </location>
    <ligand>
        <name>Fe cation</name>
        <dbReference type="ChEBI" id="CHEBI:24875"/>
        <label>2</label>
    </ligand>
</feature>
<feature type="binding site" evidence="2">
    <location>
        <position position="203"/>
    </location>
    <ligand>
        <name>Fe cation</name>
        <dbReference type="ChEBI" id="CHEBI:24875"/>
        <label>2</label>
    </ligand>
</feature>
<feature type="binding site" evidence="1">
    <location>
        <position position="205"/>
    </location>
    <ligand>
        <name>AMP</name>
        <dbReference type="ChEBI" id="CHEBI:456215"/>
    </ligand>
</feature>
<feature type="binding site" evidence="2">
    <location>
        <position position="205"/>
    </location>
    <ligand>
        <name>Fe cation</name>
        <dbReference type="ChEBI" id="CHEBI:24875"/>
        <label>1</label>
    </ligand>
</feature>